<evidence type="ECO:0000255" key="1">
    <source>
        <dbReference type="HAMAP-Rule" id="MF_01033"/>
    </source>
</evidence>
<evidence type="ECO:0000305" key="2"/>
<organism>
    <name type="scientific">Synechococcus sp. (strain ATCC 27144 / PCC 6301 / SAUG 1402/1)</name>
    <name type="common">Anacystis nidulans</name>
    <dbReference type="NCBI Taxonomy" id="269084"/>
    <lineage>
        <taxon>Bacteria</taxon>
        <taxon>Bacillati</taxon>
        <taxon>Cyanobacteriota</taxon>
        <taxon>Cyanophyceae</taxon>
        <taxon>Synechococcales</taxon>
        <taxon>Synechococcaceae</taxon>
        <taxon>Synechococcus</taxon>
    </lineage>
</organism>
<feature type="chain" id="PRO_0000083767" description="3-isopropylmalate dehydrogenase">
    <location>
        <begin position="1"/>
        <end position="365"/>
    </location>
</feature>
<feature type="binding site" evidence="1">
    <location>
        <begin position="78"/>
        <end position="91"/>
    </location>
    <ligand>
        <name>NAD(+)</name>
        <dbReference type="ChEBI" id="CHEBI:57540"/>
    </ligand>
</feature>
<feature type="binding site" evidence="1">
    <location>
        <position position="98"/>
    </location>
    <ligand>
        <name>substrate</name>
    </ligand>
</feature>
<feature type="binding site" evidence="1">
    <location>
        <position position="108"/>
    </location>
    <ligand>
        <name>substrate</name>
    </ligand>
</feature>
<feature type="binding site" evidence="1">
    <location>
        <position position="136"/>
    </location>
    <ligand>
        <name>substrate</name>
    </ligand>
</feature>
<feature type="binding site" evidence="1">
    <location>
        <position position="226"/>
    </location>
    <ligand>
        <name>Mg(2+)</name>
        <dbReference type="ChEBI" id="CHEBI:18420"/>
    </ligand>
</feature>
<feature type="binding site" evidence="1">
    <location>
        <position position="226"/>
    </location>
    <ligand>
        <name>substrate</name>
    </ligand>
</feature>
<feature type="binding site" evidence="1">
    <location>
        <position position="250"/>
    </location>
    <ligand>
        <name>Mg(2+)</name>
        <dbReference type="ChEBI" id="CHEBI:18420"/>
    </ligand>
</feature>
<feature type="binding site" evidence="1">
    <location>
        <position position="254"/>
    </location>
    <ligand>
        <name>Mg(2+)</name>
        <dbReference type="ChEBI" id="CHEBI:18420"/>
    </ligand>
</feature>
<feature type="binding site" evidence="1">
    <location>
        <begin position="284"/>
        <end position="296"/>
    </location>
    <ligand>
        <name>NAD(+)</name>
        <dbReference type="ChEBI" id="CHEBI:57540"/>
    </ligand>
</feature>
<feature type="site" description="Important for catalysis" evidence="1">
    <location>
        <position position="143"/>
    </location>
</feature>
<feature type="site" description="Important for catalysis" evidence="1">
    <location>
        <position position="194"/>
    </location>
</feature>
<protein>
    <recommendedName>
        <fullName evidence="1">3-isopropylmalate dehydrogenase</fullName>
        <ecNumber evidence="1">1.1.1.85</ecNumber>
    </recommendedName>
    <alternativeName>
        <fullName evidence="1">3-IPM-DH</fullName>
    </alternativeName>
    <alternativeName>
        <fullName evidence="1">Beta-IPM dehydrogenase</fullName>
        <shortName evidence="1">IMDH</shortName>
    </alternativeName>
</protein>
<dbReference type="EC" id="1.1.1.85" evidence="1"/>
<dbReference type="EMBL" id="AP008231">
    <property type="protein sequence ID" value="BAD80680.1"/>
    <property type="status" value="ALT_INIT"/>
    <property type="molecule type" value="Genomic_DNA"/>
</dbReference>
<dbReference type="RefSeq" id="WP_011378058.1">
    <property type="nucleotide sequence ID" value="NZ_CP085785.1"/>
</dbReference>
<dbReference type="SMR" id="Q5MZ40"/>
<dbReference type="GeneID" id="72430461"/>
<dbReference type="KEGG" id="syc:syc2490_c"/>
<dbReference type="eggNOG" id="COG0473">
    <property type="taxonomic scope" value="Bacteria"/>
</dbReference>
<dbReference type="UniPathway" id="UPA00048">
    <property type="reaction ID" value="UER00072"/>
</dbReference>
<dbReference type="Proteomes" id="UP000001175">
    <property type="component" value="Chromosome"/>
</dbReference>
<dbReference type="GO" id="GO:0005829">
    <property type="term" value="C:cytosol"/>
    <property type="evidence" value="ECO:0007669"/>
    <property type="project" value="TreeGrafter"/>
</dbReference>
<dbReference type="GO" id="GO:0003862">
    <property type="term" value="F:3-isopropylmalate dehydrogenase activity"/>
    <property type="evidence" value="ECO:0007669"/>
    <property type="project" value="UniProtKB-UniRule"/>
</dbReference>
<dbReference type="GO" id="GO:0000287">
    <property type="term" value="F:magnesium ion binding"/>
    <property type="evidence" value="ECO:0007669"/>
    <property type="project" value="InterPro"/>
</dbReference>
<dbReference type="GO" id="GO:0051287">
    <property type="term" value="F:NAD binding"/>
    <property type="evidence" value="ECO:0007669"/>
    <property type="project" value="InterPro"/>
</dbReference>
<dbReference type="GO" id="GO:0009098">
    <property type="term" value="P:L-leucine biosynthetic process"/>
    <property type="evidence" value="ECO:0007669"/>
    <property type="project" value="UniProtKB-UniRule"/>
</dbReference>
<dbReference type="FunFam" id="3.40.718.10:FF:000004">
    <property type="entry name" value="3-isopropylmalate dehydrogenase"/>
    <property type="match status" value="1"/>
</dbReference>
<dbReference type="Gene3D" id="3.40.718.10">
    <property type="entry name" value="Isopropylmalate Dehydrogenase"/>
    <property type="match status" value="1"/>
</dbReference>
<dbReference type="HAMAP" id="MF_01033">
    <property type="entry name" value="LeuB_type1"/>
    <property type="match status" value="1"/>
</dbReference>
<dbReference type="InterPro" id="IPR019818">
    <property type="entry name" value="IsoCit/isopropylmalate_DH_CS"/>
</dbReference>
<dbReference type="InterPro" id="IPR024084">
    <property type="entry name" value="IsoPropMal-DH-like_dom"/>
</dbReference>
<dbReference type="InterPro" id="IPR004429">
    <property type="entry name" value="Isopropylmalate_DH"/>
</dbReference>
<dbReference type="NCBIfam" id="TIGR00169">
    <property type="entry name" value="leuB"/>
    <property type="match status" value="1"/>
</dbReference>
<dbReference type="PANTHER" id="PTHR42979">
    <property type="entry name" value="3-ISOPROPYLMALATE DEHYDROGENASE"/>
    <property type="match status" value="1"/>
</dbReference>
<dbReference type="PANTHER" id="PTHR42979:SF1">
    <property type="entry name" value="3-ISOPROPYLMALATE DEHYDROGENASE"/>
    <property type="match status" value="1"/>
</dbReference>
<dbReference type="Pfam" id="PF00180">
    <property type="entry name" value="Iso_dh"/>
    <property type="match status" value="1"/>
</dbReference>
<dbReference type="SMART" id="SM01329">
    <property type="entry name" value="Iso_dh"/>
    <property type="match status" value="1"/>
</dbReference>
<dbReference type="SUPFAM" id="SSF53659">
    <property type="entry name" value="Isocitrate/Isopropylmalate dehydrogenase-like"/>
    <property type="match status" value="1"/>
</dbReference>
<dbReference type="PROSITE" id="PS00470">
    <property type="entry name" value="IDH_IMDH"/>
    <property type="match status" value="1"/>
</dbReference>
<reference key="1">
    <citation type="journal article" date="2007" name="Photosyn. Res.">
        <title>Complete nucleotide sequence of the freshwater unicellular cyanobacterium Synechococcus elongatus PCC 6301 chromosome: gene content and organization.</title>
        <authorList>
            <person name="Sugita C."/>
            <person name="Ogata K."/>
            <person name="Shikata M."/>
            <person name="Jikuya H."/>
            <person name="Takano J."/>
            <person name="Furumichi M."/>
            <person name="Kanehisa M."/>
            <person name="Omata T."/>
            <person name="Sugiura M."/>
            <person name="Sugita M."/>
        </authorList>
    </citation>
    <scope>NUCLEOTIDE SEQUENCE [LARGE SCALE GENOMIC DNA]</scope>
    <source>
        <strain>ATCC 27144 / PCC 6301 / SAUG 1402/1</strain>
    </source>
</reference>
<gene>
    <name evidence="1" type="primary">leuB</name>
    <name type="ordered locus">syc2490_c</name>
</gene>
<name>LEU3_SYNP6</name>
<accession>Q5MZ40</accession>
<sequence>MTRSYRITLLPGDGIGPEIMAVTVDILRAIGRQFDLNFEFEEALIGGSAIDATGEPLPEATLATCRNSDAVLLAAIGGYKWDSLPRSQRPETGLLGLRAGLGLFANLRPAAILPQLVDASSLKREVIEGVDLMVVRELTGGIYFGEPKGCFADEQGRQRAFNTMVYREDEIDRIGRVAFDIARKRGKRLCSVDKANVLEVSQLWRDRMTLLGSDYADVELSHLYVDNAAMQLVRWPKQFDTIVTGNLFGDILSDIAAMLTGSIGMLPSASLGAEGPGVFEPVHGSAPDIAGQDKANPLAQVLSAAMMLRYGLDEPEAAARIEAAVNQVLDQGYRTGDLYSEGMTLVGCKGMGDALLAALESPVSA</sequence>
<comment type="function">
    <text evidence="1">Catalyzes the oxidation of 3-carboxy-2-hydroxy-4-methylpentanoate (3-isopropylmalate) to 3-carboxy-4-methyl-2-oxopentanoate. The product decarboxylates to 4-methyl-2 oxopentanoate.</text>
</comment>
<comment type="catalytic activity">
    <reaction evidence="1">
        <text>(2R,3S)-3-isopropylmalate + NAD(+) = 4-methyl-2-oxopentanoate + CO2 + NADH</text>
        <dbReference type="Rhea" id="RHEA:32271"/>
        <dbReference type="ChEBI" id="CHEBI:16526"/>
        <dbReference type="ChEBI" id="CHEBI:17865"/>
        <dbReference type="ChEBI" id="CHEBI:35121"/>
        <dbReference type="ChEBI" id="CHEBI:57540"/>
        <dbReference type="ChEBI" id="CHEBI:57945"/>
        <dbReference type="EC" id="1.1.1.85"/>
    </reaction>
</comment>
<comment type="cofactor">
    <cofactor evidence="1">
        <name>Mg(2+)</name>
        <dbReference type="ChEBI" id="CHEBI:18420"/>
    </cofactor>
    <cofactor evidence="1">
        <name>Mn(2+)</name>
        <dbReference type="ChEBI" id="CHEBI:29035"/>
    </cofactor>
    <text evidence="1">Binds 1 Mg(2+) or Mn(2+) ion per subunit.</text>
</comment>
<comment type="pathway">
    <text evidence="1">Amino-acid biosynthesis; L-leucine biosynthesis; L-leucine from 3-methyl-2-oxobutanoate: step 3/4.</text>
</comment>
<comment type="subunit">
    <text evidence="1">Homodimer.</text>
</comment>
<comment type="subcellular location">
    <subcellularLocation>
        <location evidence="1">Cytoplasm</location>
    </subcellularLocation>
</comment>
<comment type="similarity">
    <text evidence="1">Belongs to the isocitrate and isopropylmalate dehydrogenases family. LeuB type 1 subfamily.</text>
</comment>
<comment type="sequence caution" evidence="2">
    <conflict type="erroneous initiation">
        <sequence resource="EMBL-CDS" id="BAD80680"/>
    </conflict>
</comment>
<keyword id="KW-0028">Amino-acid biosynthesis</keyword>
<keyword id="KW-0100">Branched-chain amino acid biosynthesis</keyword>
<keyword id="KW-0963">Cytoplasm</keyword>
<keyword id="KW-0432">Leucine biosynthesis</keyword>
<keyword id="KW-0460">Magnesium</keyword>
<keyword id="KW-0464">Manganese</keyword>
<keyword id="KW-0479">Metal-binding</keyword>
<keyword id="KW-0520">NAD</keyword>
<keyword id="KW-0560">Oxidoreductase</keyword>
<proteinExistence type="inferred from homology"/>